<accession>B2VCA8</accession>
<keyword id="KW-0066">ATP synthesis</keyword>
<keyword id="KW-0997">Cell inner membrane</keyword>
<keyword id="KW-1003">Cell membrane</keyword>
<keyword id="KW-0138">CF(0)</keyword>
<keyword id="KW-0375">Hydrogen ion transport</keyword>
<keyword id="KW-0406">Ion transport</keyword>
<keyword id="KW-0472">Membrane</keyword>
<keyword id="KW-1185">Reference proteome</keyword>
<keyword id="KW-0812">Transmembrane</keyword>
<keyword id="KW-1133">Transmembrane helix</keyword>
<keyword id="KW-0813">Transport</keyword>
<dbReference type="EMBL" id="CU468135">
    <property type="protein sequence ID" value="CAO98525.1"/>
    <property type="molecule type" value="Genomic_DNA"/>
</dbReference>
<dbReference type="RefSeq" id="WP_012443145.1">
    <property type="nucleotide sequence ID" value="NC_010694.1"/>
</dbReference>
<dbReference type="SMR" id="B2VCA8"/>
<dbReference type="STRING" id="465817.ETA_34790"/>
<dbReference type="KEGG" id="eta:ETA_34790"/>
<dbReference type="eggNOG" id="COG0711">
    <property type="taxonomic scope" value="Bacteria"/>
</dbReference>
<dbReference type="HOGENOM" id="CLU_079215_4_5_6"/>
<dbReference type="OrthoDB" id="9788020at2"/>
<dbReference type="Proteomes" id="UP000001726">
    <property type="component" value="Chromosome"/>
</dbReference>
<dbReference type="GO" id="GO:0005886">
    <property type="term" value="C:plasma membrane"/>
    <property type="evidence" value="ECO:0007669"/>
    <property type="project" value="UniProtKB-SubCell"/>
</dbReference>
<dbReference type="GO" id="GO:0045259">
    <property type="term" value="C:proton-transporting ATP synthase complex"/>
    <property type="evidence" value="ECO:0007669"/>
    <property type="project" value="UniProtKB-KW"/>
</dbReference>
<dbReference type="GO" id="GO:0046933">
    <property type="term" value="F:proton-transporting ATP synthase activity, rotational mechanism"/>
    <property type="evidence" value="ECO:0007669"/>
    <property type="project" value="UniProtKB-UniRule"/>
</dbReference>
<dbReference type="GO" id="GO:0046961">
    <property type="term" value="F:proton-transporting ATPase activity, rotational mechanism"/>
    <property type="evidence" value="ECO:0007669"/>
    <property type="project" value="TreeGrafter"/>
</dbReference>
<dbReference type="CDD" id="cd06503">
    <property type="entry name" value="ATP-synt_Fo_b"/>
    <property type="match status" value="1"/>
</dbReference>
<dbReference type="FunFam" id="1.20.5.620:FF:000001">
    <property type="entry name" value="ATP synthase subunit b"/>
    <property type="match status" value="1"/>
</dbReference>
<dbReference type="Gene3D" id="1.20.5.620">
    <property type="entry name" value="F1F0 ATP synthase subunit B, membrane domain"/>
    <property type="match status" value="1"/>
</dbReference>
<dbReference type="HAMAP" id="MF_01398">
    <property type="entry name" value="ATP_synth_b_bprime"/>
    <property type="match status" value="1"/>
</dbReference>
<dbReference type="InterPro" id="IPR028987">
    <property type="entry name" value="ATP_synth_B-like_membr_sf"/>
</dbReference>
<dbReference type="InterPro" id="IPR002146">
    <property type="entry name" value="ATP_synth_b/b'su_bac/chlpt"/>
</dbReference>
<dbReference type="InterPro" id="IPR005864">
    <property type="entry name" value="ATP_synth_F0_bsu_bac"/>
</dbReference>
<dbReference type="InterPro" id="IPR050059">
    <property type="entry name" value="ATP_synthase_B_chain"/>
</dbReference>
<dbReference type="NCBIfam" id="TIGR01144">
    <property type="entry name" value="ATP_synt_b"/>
    <property type="match status" value="1"/>
</dbReference>
<dbReference type="NCBIfam" id="NF004411">
    <property type="entry name" value="PRK05759.1-2"/>
    <property type="match status" value="1"/>
</dbReference>
<dbReference type="NCBIfam" id="NF004413">
    <property type="entry name" value="PRK05759.1-4"/>
    <property type="match status" value="1"/>
</dbReference>
<dbReference type="PANTHER" id="PTHR33445:SF1">
    <property type="entry name" value="ATP SYNTHASE SUBUNIT B"/>
    <property type="match status" value="1"/>
</dbReference>
<dbReference type="PANTHER" id="PTHR33445">
    <property type="entry name" value="ATP SYNTHASE SUBUNIT B', CHLOROPLASTIC"/>
    <property type="match status" value="1"/>
</dbReference>
<dbReference type="Pfam" id="PF00430">
    <property type="entry name" value="ATP-synt_B"/>
    <property type="match status" value="1"/>
</dbReference>
<dbReference type="SUPFAM" id="SSF81573">
    <property type="entry name" value="F1F0 ATP synthase subunit B, membrane domain"/>
    <property type="match status" value="1"/>
</dbReference>
<proteinExistence type="inferred from homology"/>
<gene>
    <name evidence="1" type="primary">atpF</name>
    <name type="ordered locus">ETA_34790</name>
</gene>
<evidence type="ECO:0000255" key="1">
    <source>
        <dbReference type="HAMAP-Rule" id="MF_01398"/>
    </source>
</evidence>
<organism>
    <name type="scientific">Erwinia tasmaniensis (strain DSM 17950 / CFBP 7177 / CIP 109463 / NCPPB 4357 / Et1/99)</name>
    <dbReference type="NCBI Taxonomy" id="465817"/>
    <lineage>
        <taxon>Bacteria</taxon>
        <taxon>Pseudomonadati</taxon>
        <taxon>Pseudomonadota</taxon>
        <taxon>Gammaproteobacteria</taxon>
        <taxon>Enterobacterales</taxon>
        <taxon>Erwiniaceae</taxon>
        <taxon>Erwinia</taxon>
    </lineage>
</organism>
<feature type="chain" id="PRO_0000368471" description="ATP synthase subunit b">
    <location>
        <begin position="1"/>
        <end position="156"/>
    </location>
</feature>
<feature type="transmembrane region" description="Helical" evidence="1">
    <location>
        <begin position="11"/>
        <end position="31"/>
    </location>
</feature>
<reference key="1">
    <citation type="journal article" date="2008" name="Environ. Microbiol.">
        <title>The genome of Erwinia tasmaniensis strain Et1/99, a non-pathogenic bacterium in the genus Erwinia.</title>
        <authorList>
            <person name="Kube M."/>
            <person name="Migdoll A.M."/>
            <person name="Mueller I."/>
            <person name="Kuhl H."/>
            <person name="Beck A."/>
            <person name="Reinhardt R."/>
            <person name="Geider K."/>
        </authorList>
    </citation>
    <scope>NUCLEOTIDE SEQUENCE [LARGE SCALE GENOMIC DNA]</scope>
    <source>
        <strain>DSM 17950 / CFBP 7177 / CIP 109463 / NCPPB 4357 / Et1/99</strain>
    </source>
</reference>
<protein>
    <recommendedName>
        <fullName evidence="1">ATP synthase subunit b</fullName>
    </recommendedName>
    <alternativeName>
        <fullName evidence="1">ATP synthase F(0) sector subunit b</fullName>
    </alternativeName>
    <alternativeName>
        <fullName evidence="1">ATPase subunit I</fullName>
    </alternativeName>
    <alternativeName>
        <fullName evidence="1">F-type ATPase subunit b</fullName>
        <shortName evidence="1">F-ATPase subunit b</shortName>
    </alternativeName>
</protein>
<name>ATPF_ERWT9</name>
<sequence>MNINATILGQAIAFILFVAFCMKYVWPPLMAAIEKRQKEVADGLASAERAKKDLDLAQASATDQLKKAKDDAQVIIEQANKRRAQILDDAKAEAEQERNKIVTQAQAEIDAERKRAREELRKQVAMLAVAGAEKIIERSVDEAANSDIVDKLVAEL</sequence>
<comment type="function">
    <text evidence="1">F(1)F(0) ATP synthase produces ATP from ADP in the presence of a proton or sodium gradient. F-type ATPases consist of two structural domains, F(1) containing the extramembraneous catalytic core and F(0) containing the membrane proton channel, linked together by a central stalk and a peripheral stalk. During catalysis, ATP synthesis in the catalytic domain of F(1) is coupled via a rotary mechanism of the central stalk subunits to proton translocation.</text>
</comment>
<comment type="function">
    <text evidence="1">Component of the F(0) channel, it forms part of the peripheral stalk, linking F(1) to F(0).</text>
</comment>
<comment type="subunit">
    <text evidence="1">F-type ATPases have 2 components, F(1) - the catalytic core - and F(0) - the membrane proton channel. F(1) has five subunits: alpha(3), beta(3), gamma(1), delta(1), epsilon(1). F(0) has three main subunits: a(1), b(2) and c(10-14). The alpha and beta chains form an alternating ring which encloses part of the gamma chain. F(1) is attached to F(0) by a central stalk formed by the gamma and epsilon chains, while a peripheral stalk is formed by the delta and b chains.</text>
</comment>
<comment type="subcellular location">
    <subcellularLocation>
        <location evidence="1">Cell inner membrane</location>
        <topology evidence="1">Single-pass membrane protein</topology>
    </subcellularLocation>
</comment>
<comment type="similarity">
    <text evidence="1">Belongs to the ATPase B chain family.</text>
</comment>